<name>ARLY_CLOB8</name>
<proteinExistence type="inferred from homology"/>
<accession>A6M1Z5</accession>
<comment type="catalytic activity">
    <reaction evidence="1">
        <text>2-(N(omega)-L-arginino)succinate = fumarate + L-arginine</text>
        <dbReference type="Rhea" id="RHEA:24020"/>
        <dbReference type="ChEBI" id="CHEBI:29806"/>
        <dbReference type="ChEBI" id="CHEBI:32682"/>
        <dbReference type="ChEBI" id="CHEBI:57472"/>
        <dbReference type="EC" id="4.3.2.1"/>
    </reaction>
</comment>
<comment type="pathway">
    <text evidence="1">Amino-acid biosynthesis; L-arginine biosynthesis; L-arginine from L-ornithine and carbamoyl phosphate: step 3/3.</text>
</comment>
<comment type="subcellular location">
    <subcellularLocation>
        <location evidence="1">Cytoplasm</location>
    </subcellularLocation>
</comment>
<comment type="similarity">
    <text evidence="1">Belongs to the lyase 1 family. Argininosuccinate lyase subfamily.</text>
</comment>
<organism>
    <name type="scientific">Clostridium beijerinckii (strain ATCC 51743 / NCIMB 8052)</name>
    <name type="common">Clostridium acetobutylicum</name>
    <dbReference type="NCBI Taxonomy" id="290402"/>
    <lineage>
        <taxon>Bacteria</taxon>
        <taxon>Bacillati</taxon>
        <taxon>Bacillota</taxon>
        <taxon>Clostridia</taxon>
        <taxon>Eubacteriales</taxon>
        <taxon>Clostridiaceae</taxon>
        <taxon>Clostridium</taxon>
    </lineage>
</organism>
<feature type="chain" id="PRO_1000073842" description="Argininosuccinate lyase">
    <location>
        <begin position="1"/>
        <end position="461"/>
    </location>
</feature>
<dbReference type="EC" id="4.3.2.1" evidence="1"/>
<dbReference type="EMBL" id="CP000721">
    <property type="protein sequence ID" value="ABR36625.1"/>
    <property type="molecule type" value="Genomic_DNA"/>
</dbReference>
<dbReference type="RefSeq" id="WP_012060672.1">
    <property type="nucleotide sequence ID" value="NC_009617.1"/>
</dbReference>
<dbReference type="SMR" id="A6M1Z5"/>
<dbReference type="KEGG" id="cbe:Cbei_4516"/>
<dbReference type="eggNOG" id="COG0165">
    <property type="taxonomic scope" value="Bacteria"/>
</dbReference>
<dbReference type="HOGENOM" id="CLU_027272_2_3_9"/>
<dbReference type="UniPathway" id="UPA00068">
    <property type="reaction ID" value="UER00114"/>
</dbReference>
<dbReference type="Proteomes" id="UP000000565">
    <property type="component" value="Chromosome"/>
</dbReference>
<dbReference type="GO" id="GO:0005829">
    <property type="term" value="C:cytosol"/>
    <property type="evidence" value="ECO:0007669"/>
    <property type="project" value="TreeGrafter"/>
</dbReference>
<dbReference type="GO" id="GO:0004056">
    <property type="term" value="F:argininosuccinate lyase activity"/>
    <property type="evidence" value="ECO:0007669"/>
    <property type="project" value="UniProtKB-UniRule"/>
</dbReference>
<dbReference type="GO" id="GO:0042450">
    <property type="term" value="P:arginine biosynthetic process via ornithine"/>
    <property type="evidence" value="ECO:0007669"/>
    <property type="project" value="InterPro"/>
</dbReference>
<dbReference type="GO" id="GO:0006526">
    <property type="term" value="P:L-arginine biosynthetic process"/>
    <property type="evidence" value="ECO:0007669"/>
    <property type="project" value="UniProtKB-UniRule"/>
</dbReference>
<dbReference type="CDD" id="cd01359">
    <property type="entry name" value="Argininosuccinate_lyase"/>
    <property type="match status" value="1"/>
</dbReference>
<dbReference type="FunFam" id="1.10.40.30:FF:000001">
    <property type="entry name" value="Argininosuccinate lyase"/>
    <property type="match status" value="1"/>
</dbReference>
<dbReference type="FunFam" id="1.20.200.10:FF:000002">
    <property type="entry name" value="Argininosuccinate lyase"/>
    <property type="match status" value="1"/>
</dbReference>
<dbReference type="Gene3D" id="1.10.40.30">
    <property type="entry name" value="Fumarase/aspartase (C-terminal domain)"/>
    <property type="match status" value="1"/>
</dbReference>
<dbReference type="Gene3D" id="1.20.200.10">
    <property type="entry name" value="Fumarase/aspartase (Central domain)"/>
    <property type="match status" value="1"/>
</dbReference>
<dbReference type="Gene3D" id="1.10.275.10">
    <property type="entry name" value="Fumarase/aspartase (N-terminal domain)"/>
    <property type="match status" value="1"/>
</dbReference>
<dbReference type="HAMAP" id="MF_00006">
    <property type="entry name" value="Arg_succ_lyase"/>
    <property type="match status" value="1"/>
</dbReference>
<dbReference type="InterPro" id="IPR029419">
    <property type="entry name" value="Arg_succ_lyase_C"/>
</dbReference>
<dbReference type="InterPro" id="IPR009049">
    <property type="entry name" value="Argininosuccinate_lyase"/>
</dbReference>
<dbReference type="InterPro" id="IPR024083">
    <property type="entry name" value="Fumarase/histidase_N"/>
</dbReference>
<dbReference type="InterPro" id="IPR020557">
    <property type="entry name" value="Fumarate_lyase_CS"/>
</dbReference>
<dbReference type="InterPro" id="IPR000362">
    <property type="entry name" value="Fumarate_lyase_fam"/>
</dbReference>
<dbReference type="InterPro" id="IPR022761">
    <property type="entry name" value="Fumarate_lyase_N"/>
</dbReference>
<dbReference type="InterPro" id="IPR008948">
    <property type="entry name" value="L-Aspartase-like"/>
</dbReference>
<dbReference type="NCBIfam" id="TIGR00838">
    <property type="entry name" value="argH"/>
    <property type="match status" value="1"/>
</dbReference>
<dbReference type="PANTHER" id="PTHR43814">
    <property type="entry name" value="ARGININOSUCCINATE LYASE"/>
    <property type="match status" value="1"/>
</dbReference>
<dbReference type="PANTHER" id="PTHR43814:SF1">
    <property type="entry name" value="ARGININOSUCCINATE LYASE"/>
    <property type="match status" value="1"/>
</dbReference>
<dbReference type="Pfam" id="PF14698">
    <property type="entry name" value="ASL_C2"/>
    <property type="match status" value="1"/>
</dbReference>
<dbReference type="Pfam" id="PF00206">
    <property type="entry name" value="Lyase_1"/>
    <property type="match status" value="1"/>
</dbReference>
<dbReference type="PRINTS" id="PR00145">
    <property type="entry name" value="ARGSUCLYASE"/>
</dbReference>
<dbReference type="PRINTS" id="PR00149">
    <property type="entry name" value="FUMRATELYASE"/>
</dbReference>
<dbReference type="SUPFAM" id="SSF48557">
    <property type="entry name" value="L-aspartase-like"/>
    <property type="match status" value="1"/>
</dbReference>
<dbReference type="PROSITE" id="PS00163">
    <property type="entry name" value="FUMARATE_LYASES"/>
    <property type="match status" value="1"/>
</dbReference>
<reference key="1">
    <citation type="submission" date="2007-06" db="EMBL/GenBank/DDBJ databases">
        <title>Complete sequence of Clostridium beijerinckii NCIMB 8052.</title>
        <authorList>
            <consortium name="US DOE Joint Genome Institute"/>
            <person name="Copeland A."/>
            <person name="Lucas S."/>
            <person name="Lapidus A."/>
            <person name="Barry K."/>
            <person name="Detter J.C."/>
            <person name="Glavina del Rio T."/>
            <person name="Hammon N."/>
            <person name="Israni S."/>
            <person name="Dalin E."/>
            <person name="Tice H."/>
            <person name="Pitluck S."/>
            <person name="Sims D."/>
            <person name="Brettin T."/>
            <person name="Bruce D."/>
            <person name="Tapia R."/>
            <person name="Brainard J."/>
            <person name="Schmutz J."/>
            <person name="Larimer F."/>
            <person name="Land M."/>
            <person name="Hauser L."/>
            <person name="Kyrpides N."/>
            <person name="Mikhailova N."/>
            <person name="Bennet G."/>
            <person name="Cann I."/>
            <person name="Chen J.-S."/>
            <person name="Contreras A.L."/>
            <person name="Jones D."/>
            <person name="Kashket E."/>
            <person name="Mitchell W."/>
            <person name="Stoddard S."/>
            <person name="Schwarz W."/>
            <person name="Qureshi N."/>
            <person name="Young M."/>
            <person name="Shi Z."/>
            <person name="Ezeji T."/>
            <person name="White B."/>
            <person name="Blaschek H."/>
            <person name="Richardson P."/>
        </authorList>
    </citation>
    <scope>NUCLEOTIDE SEQUENCE [LARGE SCALE GENOMIC DNA]</scope>
    <source>
        <strain>ATCC 51743 / NCIMB 8052</strain>
    </source>
</reference>
<sequence length="461" mass="51892">MKLWGGRFKKGTDKLVNDFNSSINVDSRMYKEDIEGSLAHASMLGNQNIISKEASDRITSGLLEILKRMDNGVIEIDETSEDIHSFVEGTLTYYIGEYGKMLHTGRSRNDQVTLDLRLYLKKAITSLKQDIIALEEVLLEKANENIGTIMPGYTHMQKAQPITFAHHLLAYAEMFKRDLGRLSDCYKRVDEMPLGSGALATSTYPIDREAVARDLGFSKVTLNSLDSVSDRDYAIETLSCLSMIMMHLSRFSEEIILWCTNEFSFIELDDGYSTGSSIMPQKKNPDVAELVRGKTGRVYGDLMTLLTVMKGIPLAYNKDMQEDKEALFDGLDTVVLSLKTFCGMIKTMKVKKENMRKGAGLGFTNATDVADYLVKKGMPFRNAHEVVGEIVLQCIKDNKMIEELTMEEFKNFSPTFEEDIYHAIDLLTCVEERKVIGGPSTESVKIQIEALKNFIAENKEV</sequence>
<keyword id="KW-0028">Amino-acid biosynthesis</keyword>
<keyword id="KW-0055">Arginine biosynthesis</keyword>
<keyword id="KW-0963">Cytoplasm</keyword>
<keyword id="KW-0456">Lyase</keyword>
<protein>
    <recommendedName>
        <fullName evidence="1">Argininosuccinate lyase</fullName>
        <shortName evidence="1">ASAL</shortName>
        <ecNumber evidence="1">4.3.2.1</ecNumber>
    </recommendedName>
    <alternativeName>
        <fullName evidence="1">Arginosuccinase</fullName>
    </alternativeName>
</protein>
<gene>
    <name evidence="1" type="primary">argH</name>
    <name type="ordered locus">Cbei_4516</name>
</gene>
<evidence type="ECO:0000255" key="1">
    <source>
        <dbReference type="HAMAP-Rule" id="MF_00006"/>
    </source>
</evidence>